<keyword id="KW-0456">Lyase</keyword>
<keyword id="KW-0460">Magnesium</keyword>
<keyword id="KW-0464">Manganese</keyword>
<keyword id="KW-0479">Metal-binding</keyword>
<keyword id="KW-1185">Reference proteome</keyword>
<keyword id="KW-0686">Riboflavin biosynthesis</keyword>
<feature type="chain" id="PRO_1000040619" description="3,4-dihydroxy-2-butanone 4-phosphate synthase">
    <location>
        <begin position="1"/>
        <end position="228"/>
    </location>
</feature>
<feature type="binding site" evidence="1">
    <location>
        <begin position="37"/>
        <end position="38"/>
    </location>
    <ligand>
        <name>D-ribulose 5-phosphate</name>
        <dbReference type="ChEBI" id="CHEBI:58121"/>
    </ligand>
</feature>
<feature type="binding site" evidence="1">
    <location>
        <position position="38"/>
    </location>
    <ligand>
        <name>Mg(2+)</name>
        <dbReference type="ChEBI" id="CHEBI:18420"/>
        <label>1</label>
    </ligand>
</feature>
<feature type="binding site" evidence="1">
    <location>
        <position position="38"/>
    </location>
    <ligand>
        <name>Mg(2+)</name>
        <dbReference type="ChEBI" id="CHEBI:18420"/>
        <label>2</label>
    </ligand>
</feature>
<feature type="binding site" evidence="1">
    <location>
        <position position="42"/>
    </location>
    <ligand>
        <name>D-ribulose 5-phosphate</name>
        <dbReference type="ChEBI" id="CHEBI:58121"/>
    </ligand>
</feature>
<feature type="binding site" evidence="1">
    <location>
        <begin position="150"/>
        <end position="154"/>
    </location>
    <ligand>
        <name>D-ribulose 5-phosphate</name>
        <dbReference type="ChEBI" id="CHEBI:58121"/>
    </ligand>
</feature>
<feature type="binding site" evidence="1">
    <location>
        <position position="153"/>
    </location>
    <ligand>
        <name>Mg(2+)</name>
        <dbReference type="ChEBI" id="CHEBI:18420"/>
        <label>2</label>
    </ligand>
</feature>
<feature type="binding site" evidence="1">
    <location>
        <position position="174"/>
    </location>
    <ligand>
        <name>D-ribulose 5-phosphate</name>
        <dbReference type="ChEBI" id="CHEBI:58121"/>
    </ligand>
</feature>
<feature type="site" description="Essential for catalytic activity" evidence="1">
    <location>
        <position position="136"/>
    </location>
</feature>
<feature type="site" description="Essential for catalytic activity" evidence="1">
    <location>
        <position position="174"/>
    </location>
</feature>
<evidence type="ECO:0000255" key="1">
    <source>
        <dbReference type="HAMAP-Rule" id="MF_00180"/>
    </source>
</evidence>
<proteinExistence type="inferred from homology"/>
<dbReference type="EC" id="4.1.99.12" evidence="1"/>
<dbReference type="EMBL" id="CR378677">
    <property type="protein sequence ID" value="CAG22770.1"/>
    <property type="molecule type" value="Genomic_DNA"/>
</dbReference>
<dbReference type="RefSeq" id="WP_011220971.1">
    <property type="nucleotide sequence ID" value="NC_006371.1"/>
</dbReference>
<dbReference type="SMR" id="Q6LIW0"/>
<dbReference type="STRING" id="298386.PBPRB0898"/>
<dbReference type="KEGG" id="ppr:PBPRB0898"/>
<dbReference type="eggNOG" id="COG0108">
    <property type="taxonomic scope" value="Bacteria"/>
</dbReference>
<dbReference type="HOGENOM" id="CLU_020273_3_0_6"/>
<dbReference type="UniPathway" id="UPA00275">
    <property type="reaction ID" value="UER00399"/>
</dbReference>
<dbReference type="Proteomes" id="UP000000593">
    <property type="component" value="Chromosome 2"/>
</dbReference>
<dbReference type="GO" id="GO:0005829">
    <property type="term" value="C:cytosol"/>
    <property type="evidence" value="ECO:0007669"/>
    <property type="project" value="TreeGrafter"/>
</dbReference>
<dbReference type="GO" id="GO:0008686">
    <property type="term" value="F:3,4-dihydroxy-2-butanone-4-phosphate synthase activity"/>
    <property type="evidence" value="ECO:0007669"/>
    <property type="project" value="UniProtKB-UniRule"/>
</dbReference>
<dbReference type="GO" id="GO:0000287">
    <property type="term" value="F:magnesium ion binding"/>
    <property type="evidence" value="ECO:0007669"/>
    <property type="project" value="UniProtKB-UniRule"/>
</dbReference>
<dbReference type="GO" id="GO:0030145">
    <property type="term" value="F:manganese ion binding"/>
    <property type="evidence" value="ECO:0007669"/>
    <property type="project" value="UniProtKB-UniRule"/>
</dbReference>
<dbReference type="GO" id="GO:0009231">
    <property type="term" value="P:riboflavin biosynthetic process"/>
    <property type="evidence" value="ECO:0007669"/>
    <property type="project" value="UniProtKB-UniRule"/>
</dbReference>
<dbReference type="FunFam" id="3.90.870.10:FF:000002">
    <property type="entry name" value="3,4-dihydroxy-2-butanone 4-phosphate synthase"/>
    <property type="match status" value="1"/>
</dbReference>
<dbReference type="Gene3D" id="3.90.870.10">
    <property type="entry name" value="DHBP synthase"/>
    <property type="match status" value="1"/>
</dbReference>
<dbReference type="HAMAP" id="MF_00180">
    <property type="entry name" value="RibB"/>
    <property type="match status" value="1"/>
</dbReference>
<dbReference type="InterPro" id="IPR017945">
    <property type="entry name" value="DHBP_synth_RibB-like_a/b_dom"/>
</dbReference>
<dbReference type="InterPro" id="IPR000422">
    <property type="entry name" value="DHBP_synthase_RibB"/>
</dbReference>
<dbReference type="NCBIfam" id="TIGR00506">
    <property type="entry name" value="ribB"/>
    <property type="match status" value="1"/>
</dbReference>
<dbReference type="PANTHER" id="PTHR21327:SF38">
    <property type="entry name" value="3,4-DIHYDROXY-2-BUTANONE 4-PHOSPHATE SYNTHASE"/>
    <property type="match status" value="1"/>
</dbReference>
<dbReference type="PANTHER" id="PTHR21327">
    <property type="entry name" value="GTP CYCLOHYDROLASE II-RELATED"/>
    <property type="match status" value="1"/>
</dbReference>
<dbReference type="Pfam" id="PF00926">
    <property type="entry name" value="DHBP_synthase"/>
    <property type="match status" value="1"/>
</dbReference>
<dbReference type="SUPFAM" id="SSF55821">
    <property type="entry name" value="YrdC/RibB"/>
    <property type="match status" value="1"/>
</dbReference>
<accession>Q6LIW0</accession>
<sequence>MNQSLLTPYGTAFERVEAGLTAIREGRGVLVVDDEDRENEGDIIFAAETLTSEQMALMIRECSGIVCLCLTDERVKQLELPMMVENNTSANETGFTVTIEAAKGVTTGVSAADRVTTIKTAIADGAVPADLNHPGHVFPLKANADGVLGRRGHTEATIDLMRLSGLKPYGVLCELTNIDGTMARLPEVIVFGKKFNMPVLTIEDLAAYRLAKESNTVTNTTEEVAVIA</sequence>
<protein>
    <recommendedName>
        <fullName evidence="1">3,4-dihydroxy-2-butanone 4-phosphate synthase</fullName>
        <shortName evidence="1">DHBP synthase</shortName>
        <ecNumber evidence="1">4.1.99.12</ecNumber>
    </recommendedName>
</protein>
<organism>
    <name type="scientific">Photobacterium profundum (strain SS9)</name>
    <dbReference type="NCBI Taxonomy" id="298386"/>
    <lineage>
        <taxon>Bacteria</taxon>
        <taxon>Pseudomonadati</taxon>
        <taxon>Pseudomonadota</taxon>
        <taxon>Gammaproteobacteria</taxon>
        <taxon>Vibrionales</taxon>
        <taxon>Vibrionaceae</taxon>
        <taxon>Photobacterium</taxon>
    </lineage>
</organism>
<reference key="1">
    <citation type="journal article" date="2005" name="Science">
        <title>Life at depth: Photobacterium profundum genome sequence and expression analysis.</title>
        <authorList>
            <person name="Vezzi A."/>
            <person name="Campanaro S."/>
            <person name="D'Angelo M."/>
            <person name="Simonato F."/>
            <person name="Vitulo N."/>
            <person name="Lauro F.M."/>
            <person name="Cestaro A."/>
            <person name="Malacrida G."/>
            <person name="Simionati B."/>
            <person name="Cannata N."/>
            <person name="Romualdi C."/>
            <person name="Bartlett D.H."/>
            <person name="Valle G."/>
        </authorList>
    </citation>
    <scope>NUCLEOTIDE SEQUENCE [LARGE SCALE GENOMIC DNA]</scope>
    <source>
        <strain>ATCC BAA-1253 / SS9</strain>
    </source>
</reference>
<gene>
    <name evidence="1" type="primary">ribB</name>
    <name type="ordered locus">PBPRB0898</name>
</gene>
<comment type="function">
    <text evidence="1">Catalyzes the conversion of D-ribulose 5-phosphate to formate and 3,4-dihydroxy-2-butanone 4-phosphate.</text>
</comment>
<comment type="catalytic activity">
    <reaction evidence="1">
        <text>D-ribulose 5-phosphate = (2S)-2-hydroxy-3-oxobutyl phosphate + formate + H(+)</text>
        <dbReference type="Rhea" id="RHEA:18457"/>
        <dbReference type="ChEBI" id="CHEBI:15378"/>
        <dbReference type="ChEBI" id="CHEBI:15740"/>
        <dbReference type="ChEBI" id="CHEBI:58121"/>
        <dbReference type="ChEBI" id="CHEBI:58830"/>
        <dbReference type="EC" id="4.1.99.12"/>
    </reaction>
</comment>
<comment type="cofactor">
    <cofactor evidence="1">
        <name>Mg(2+)</name>
        <dbReference type="ChEBI" id="CHEBI:18420"/>
    </cofactor>
    <cofactor evidence="1">
        <name>Mn(2+)</name>
        <dbReference type="ChEBI" id="CHEBI:29035"/>
    </cofactor>
    <text evidence="1">Binds 2 divalent metal cations per subunit. Magnesium or manganese.</text>
</comment>
<comment type="pathway">
    <text evidence="1">Cofactor biosynthesis; riboflavin biosynthesis; 2-hydroxy-3-oxobutyl phosphate from D-ribulose 5-phosphate: step 1/1.</text>
</comment>
<comment type="subunit">
    <text evidence="1">Homodimer.</text>
</comment>
<comment type="similarity">
    <text evidence="1">Belongs to the DHBP synthase family.</text>
</comment>
<name>RIBB_PHOPR</name>